<reference key="1">
    <citation type="journal article" date="2003" name="DNA Res.">
        <title>Complete genome structure of Gloeobacter violaceus PCC 7421, a cyanobacterium that lacks thylakoids.</title>
        <authorList>
            <person name="Nakamura Y."/>
            <person name="Kaneko T."/>
            <person name="Sato S."/>
            <person name="Mimuro M."/>
            <person name="Miyashita H."/>
            <person name="Tsuchiya T."/>
            <person name="Sasamoto S."/>
            <person name="Watanabe A."/>
            <person name="Kawashima K."/>
            <person name="Kishida Y."/>
            <person name="Kiyokawa C."/>
            <person name="Kohara M."/>
            <person name="Matsumoto M."/>
            <person name="Matsuno A."/>
            <person name="Nakazaki N."/>
            <person name="Shimpo S."/>
            <person name="Takeuchi C."/>
            <person name="Yamada M."/>
            <person name="Tabata S."/>
        </authorList>
    </citation>
    <scope>NUCLEOTIDE SEQUENCE [LARGE SCALE GENOMIC DNA]</scope>
    <source>
        <strain>ATCC 29082 / PCC 7421</strain>
    </source>
</reference>
<gene>
    <name evidence="1" type="primary">miaA</name>
    <name type="ordered locus">gll3248</name>
</gene>
<proteinExistence type="inferred from homology"/>
<keyword id="KW-0067">ATP-binding</keyword>
<keyword id="KW-0460">Magnesium</keyword>
<keyword id="KW-0547">Nucleotide-binding</keyword>
<keyword id="KW-1185">Reference proteome</keyword>
<keyword id="KW-0808">Transferase</keyword>
<keyword id="KW-0819">tRNA processing</keyword>
<evidence type="ECO:0000255" key="1">
    <source>
        <dbReference type="HAMAP-Rule" id="MF_00185"/>
    </source>
</evidence>
<accession>Q7MBC1</accession>
<name>MIAA_GLOVI</name>
<sequence>MKKIVVVCGPTAAGKSQLGMHLAQHLGVPVLSADSRQVYREFDIGTAKPTREEQRRVEHCLIDVAWPTEHFNVARYRELADAEIDRLTRQGKPALLVGGSGLYLRAVSGGLEPPAVPPDPALRARLAVERLDALYQRLQQLDPESAGRIHPNDQVRIERALEVCLTTGQPLSAQRRLRARDFSLLALGVGSGREALVRRIEQRTHRMIEAGWLEEVEYLRAKYGPDLPLLSTLGYAELGAYLEERWDLAEALQQIVVHTRQFAKRQMTWFRAEPDVHWLDESAGRQTLEQQSIEQVERFLAG</sequence>
<protein>
    <recommendedName>
        <fullName evidence="1">tRNA dimethylallyltransferase</fullName>
        <ecNumber evidence="1">2.5.1.75</ecNumber>
    </recommendedName>
    <alternativeName>
        <fullName evidence="1">Dimethylallyl diphosphate:tRNA dimethylallyltransferase</fullName>
        <shortName evidence="1">DMAPP:tRNA dimethylallyltransferase</shortName>
        <shortName evidence="1">DMATase</shortName>
    </alternativeName>
    <alternativeName>
        <fullName evidence="1">Isopentenyl-diphosphate:tRNA isopentenyltransferase</fullName>
        <shortName evidence="1">IPP transferase</shortName>
        <shortName evidence="1">IPPT</shortName>
        <shortName evidence="1">IPTase</shortName>
    </alternativeName>
</protein>
<feature type="chain" id="PRO_0000163922" description="tRNA dimethylallyltransferase">
    <location>
        <begin position="1"/>
        <end position="302"/>
    </location>
</feature>
<feature type="region of interest" description="Interaction with substrate tRNA" evidence="1">
    <location>
        <begin position="34"/>
        <end position="37"/>
    </location>
</feature>
<feature type="binding site" evidence="1">
    <location>
        <begin position="9"/>
        <end position="16"/>
    </location>
    <ligand>
        <name>ATP</name>
        <dbReference type="ChEBI" id="CHEBI:30616"/>
    </ligand>
</feature>
<feature type="binding site" evidence="1">
    <location>
        <begin position="11"/>
        <end position="16"/>
    </location>
    <ligand>
        <name>substrate</name>
    </ligand>
</feature>
<feature type="site" description="Interaction with substrate tRNA" evidence="1">
    <location>
        <position position="100"/>
    </location>
</feature>
<dbReference type="EC" id="2.5.1.75" evidence="1"/>
<dbReference type="EMBL" id="BA000045">
    <property type="protein sequence ID" value="BAC91189.1"/>
    <property type="molecule type" value="Genomic_DNA"/>
</dbReference>
<dbReference type="RefSeq" id="NP_926194.1">
    <property type="nucleotide sequence ID" value="NC_005125.1"/>
</dbReference>
<dbReference type="RefSeq" id="WP_011143238.1">
    <property type="nucleotide sequence ID" value="NC_005125.1"/>
</dbReference>
<dbReference type="SMR" id="Q7MBC1"/>
<dbReference type="FunCoup" id="Q7MBC1">
    <property type="interactions" value="342"/>
</dbReference>
<dbReference type="STRING" id="251221.gene:10760757"/>
<dbReference type="EnsemblBacteria" id="BAC91189">
    <property type="protein sequence ID" value="BAC91189"/>
    <property type="gene ID" value="BAC91189"/>
</dbReference>
<dbReference type="KEGG" id="gvi:gll3248"/>
<dbReference type="PATRIC" id="fig|251221.4.peg.3277"/>
<dbReference type="eggNOG" id="COG0324">
    <property type="taxonomic scope" value="Bacteria"/>
</dbReference>
<dbReference type="HOGENOM" id="CLU_032616_0_1_3"/>
<dbReference type="InParanoid" id="Q7MBC1"/>
<dbReference type="OrthoDB" id="9776390at2"/>
<dbReference type="PhylomeDB" id="Q7MBC1"/>
<dbReference type="Proteomes" id="UP000000557">
    <property type="component" value="Chromosome"/>
</dbReference>
<dbReference type="GO" id="GO:0005524">
    <property type="term" value="F:ATP binding"/>
    <property type="evidence" value="ECO:0007669"/>
    <property type="project" value="UniProtKB-UniRule"/>
</dbReference>
<dbReference type="GO" id="GO:0052381">
    <property type="term" value="F:tRNA dimethylallyltransferase activity"/>
    <property type="evidence" value="ECO:0000318"/>
    <property type="project" value="GO_Central"/>
</dbReference>
<dbReference type="GO" id="GO:0006400">
    <property type="term" value="P:tRNA modification"/>
    <property type="evidence" value="ECO:0000318"/>
    <property type="project" value="GO_Central"/>
</dbReference>
<dbReference type="Gene3D" id="1.10.20.140">
    <property type="match status" value="1"/>
</dbReference>
<dbReference type="Gene3D" id="3.40.50.300">
    <property type="entry name" value="P-loop containing nucleotide triphosphate hydrolases"/>
    <property type="match status" value="1"/>
</dbReference>
<dbReference type="HAMAP" id="MF_00185">
    <property type="entry name" value="IPP_trans"/>
    <property type="match status" value="1"/>
</dbReference>
<dbReference type="InterPro" id="IPR039657">
    <property type="entry name" value="Dimethylallyltransferase"/>
</dbReference>
<dbReference type="InterPro" id="IPR018022">
    <property type="entry name" value="IPT"/>
</dbReference>
<dbReference type="InterPro" id="IPR027417">
    <property type="entry name" value="P-loop_NTPase"/>
</dbReference>
<dbReference type="NCBIfam" id="TIGR00174">
    <property type="entry name" value="miaA"/>
    <property type="match status" value="1"/>
</dbReference>
<dbReference type="PANTHER" id="PTHR11088">
    <property type="entry name" value="TRNA DIMETHYLALLYLTRANSFERASE"/>
    <property type="match status" value="1"/>
</dbReference>
<dbReference type="PANTHER" id="PTHR11088:SF60">
    <property type="entry name" value="TRNA DIMETHYLALLYLTRANSFERASE"/>
    <property type="match status" value="1"/>
</dbReference>
<dbReference type="Pfam" id="PF01715">
    <property type="entry name" value="IPPT"/>
    <property type="match status" value="1"/>
</dbReference>
<dbReference type="SUPFAM" id="SSF52540">
    <property type="entry name" value="P-loop containing nucleoside triphosphate hydrolases"/>
    <property type="match status" value="1"/>
</dbReference>
<organism>
    <name type="scientific">Gloeobacter violaceus (strain ATCC 29082 / PCC 7421)</name>
    <dbReference type="NCBI Taxonomy" id="251221"/>
    <lineage>
        <taxon>Bacteria</taxon>
        <taxon>Bacillati</taxon>
        <taxon>Cyanobacteriota</taxon>
        <taxon>Cyanophyceae</taxon>
        <taxon>Gloeobacterales</taxon>
        <taxon>Gloeobacteraceae</taxon>
        <taxon>Gloeobacter</taxon>
    </lineage>
</organism>
<comment type="function">
    <text evidence="1">Catalyzes the transfer of a dimethylallyl group onto the adenine at position 37 in tRNAs that read codons beginning with uridine, leading to the formation of N6-(dimethylallyl)adenosine (i(6)A).</text>
</comment>
<comment type="catalytic activity">
    <reaction evidence="1">
        <text>adenosine(37) in tRNA + dimethylallyl diphosphate = N(6)-dimethylallyladenosine(37) in tRNA + diphosphate</text>
        <dbReference type="Rhea" id="RHEA:26482"/>
        <dbReference type="Rhea" id="RHEA-COMP:10162"/>
        <dbReference type="Rhea" id="RHEA-COMP:10375"/>
        <dbReference type="ChEBI" id="CHEBI:33019"/>
        <dbReference type="ChEBI" id="CHEBI:57623"/>
        <dbReference type="ChEBI" id="CHEBI:74411"/>
        <dbReference type="ChEBI" id="CHEBI:74415"/>
        <dbReference type="EC" id="2.5.1.75"/>
    </reaction>
</comment>
<comment type="cofactor">
    <cofactor evidence="1">
        <name>Mg(2+)</name>
        <dbReference type="ChEBI" id="CHEBI:18420"/>
    </cofactor>
</comment>
<comment type="subunit">
    <text evidence="1">Monomer.</text>
</comment>
<comment type="similarity">
    <text evidence="1">Belongs to the IPP transferase family.</text>
</comment>